<keyword id="KW-0032">Aminotransferase</keyword>
<keyword id="KW-0963">Cytoplasm</keyword>
<keyword id="KW-0663">Pyridoxal phosphate</keyword>
<keyword id="KW-0808">Transferase</keyword>
<dbReference type="EC" id="2.6.1.1"/>
<dbReference type="EMBL" id="AL513382">
    <property type="protein sequence ID" value="CAD05398.1"/>
    <property type="molecule type" value="Genomic_DNA"/>
</dbReference>
<dbReference type="EMBL" id="AE014613">
    <property type="protein sequence ID" value="AAO69551.1"/>
    <property type="molecule type" value="Genomic_DNA"/>
</dbReference>
<dbReference type="EMBL" id="X89757">
    <property type="protein sequence ID" value="CAA61906.1"/>
    <property type="molecule type" value="Genomic_DNA"/>
</dbReference>
<dbReference type="RefSeq" id="NP_455484.1">
    <property type="nucleotide sequence ID" value="NC_003198.1"/>
</dbReference>
<dbReference type="RefSeq" id="WP_000462648.1">
    <property type="nucleotide sequence ID" value="NZ_WSUR01000013.1"/>
</dbReference>
<dbReference type="SMR" id="Q56114"/>
<dbReference type="STRING" id="220341.gene:17584989"/>
<dbReference type="KEGG" id="stt:t1936"/>
<dbReference type="KEGG" id="sty:STY1000"/>
<dbReference type="PATRIC" id="fig|220341.7.peg.1008"/>
<dbReference type="eggNOG" id="COG1448">
    <property type="taxonomic scope" value="Bacteria"/>
</dbReference>
<dbReference type="HOGENOM" id="CLU_032440_1_2_6"/>
<dbReference type="OMA" id="VGACTIV"/>
<dbReference type="OrthoDB" id="9766445at2"/>
<dbReference type="Proteomes" id="UP000000541">
    <property type="component" value="Chromosome"/>
</dbReference>
<dbReference type="Proteomes" id="UP000002670">
    <property type="component" value="Chromosome"/>
</dbReference>
<dbReference type="GO" id="GO:0005829">
    <property type="term" value="C:cytosol"/>
    <property type="evidence" value="ECO:0007669"/>
    <property type="project" value="TreeGrafter"/>
</dbReference>
<dbReference type="GO" id="GO:0042802">
    <property type="term" value="F:identical protein binding"/>
    <property type="evidence" value="ECO:0007669"/>
    <property type="project" value="TreeGrafter"/>
</dbReference>
<dbReference type="GO" id="GO:0004069">
    <property type="term" value="F:L-aspartate:2-oxoglutarate aminotransferase activity"/>
    <property type="evidence" value="ECO:0007669"/>
    <property type="project" value="UniProtKB-EC"/>
</dbReference>
<dbReference type="GO" id="GO:0004838">
    <property type="term" value="F:L-tyrosine-2-oxoglutarate transaminase activity"/>
    <property type="evidence" value="ECO:0007669"/>
    <property type="project" value="TreeGrafter"/>
</dbReference>
<dbReference type="GO" id="GO:0030170">
    <property type="term" value="F:pyridoxal phosphate binding"/>
    <property type="evidence" value="ECO:0007669"/>
    <property type="project" value="InterPro"/>
</dbReference>
<dbReference type="GO" id="GO:0033585">
    <property type="term" value="P:L-phenylalanine biosynthetic process from chorismate via phenylpyruvate"/>
    <property type="evidence" value="ECO:0007669"/>
    <property type="project" value="TreeGrafter"/>
</dbReference>
<dbReference type="CDD" id="cd00609">
    <property type="entry name" value="AAT_like"/>
    <property type="match status" value="1"/>
</dbReference>
<dbReference type="FunFam" id="3.40.640.10:FF:000015">
    <property type="entry name" value="Aspartate aminotransferase"/>
    <property type="match status" value="1"/>
</dbReference>
<dbReference type="FunFam" id="3.90.1150.10:FF:000001">
    <property type="entry name" value="Aspartate aminotransferase"/>
    <property type="match status" value="1"/>
</dbReference>
<dbReference type="Gene3D" id="3.90.1150.10">
    <property type="entry name" value="Aspartate Aminotransferase, domain 1"/>
    <property type="match status" value="1"/>
</dbReference>
<dbReference type="Gene3D" id="3.40.640.10">
    <property type="entry name" value="Type I PLP-dependent aspartate aminotransferase-like (Major domain)"/>
    <property type="match status" value="1"/>
</dbReference>
<dbReference type="InterPro" id="IPR004839">
    <property type="entry name" value="Aminotransferase_I/II_large"/>
</dbReference>
<dbReference type="InterPro" id="IPR000796">
    <property type="entry name" value="Asp_trans"/>
</dbReference>
<dbReference type="InterPro" id="IPR004838">
    <property type="entry name" value="NHTrfase_class1_PyrdxlP-BS"/>
</dbReference>
<dbReference type="InterPro" id="IPR015424">
    <property type="entry name" value="PyrdxlP-dep_Trfase"/>
</dbReference>
<dbReference type="InterPro" id="IPR015421">
    <property type="entry name" value="PyrdxlP-dep_Trfase_major"/>
</dbReference>
<dbReference type="InterPro" id="IPR015422">
    <property type="entry name" value="PyrdxlP-dep_Trfase_small"/>
</dbReference>
<dbReference type="NCBIfam" id="NF006719">
    <property type="entry name" value="PRK09257.1"/>
    <property type="match status" value="1"/>
</dbReference>
<dbReference type="PANTHER" id="PTHR11879">
    <property type="entry name" value="ASPARTATE AMINOTRANSFERASE"/>
    <property type="match status" value="1"/>
</dbReference>
<dbReference type="PANTHER" id="PTHR11879:SF22">
    <property type="entry name" value="ASPARTATE AMINOTRANSFERASE, MITOCHONDRIAL"/>
    <property type="match status" value="1"/>
</dbReference>
<dbReference type="Pfam" id="PF00155">
    <property type="entry name" value="Aminotran_1_2"/>
    <property type="match status" value="1"/>
</dbReference>
<dbReference type="PRINTS" id="PR00799">
    <property type="entry name" value="TRANSAMINASE"/>
</dbReference>
<dbReference type="SUPFAM" id="SSF53383">
    <property type="entry name" value="PLP-dependent transferases"/>
    <property type="match status" value="1"/>
</dbReference>
<dbReference type="PROSITE" id="PS00105">
    <property type="entry name" value="AA_TRANSFER_CLASS_1"/>
    <property type="match status" value="1"/>
</dbReference>
<evidence type="ECO:0000250" key="1"/>
<evidence type="ECO:0000305" key="2"/>
<reference key="1">
    <citation type="journal article" date="2001" name="Nature">
        <title>Complete genome sequence of a multiple drug resistant Salmonella enterica serovar Typhi CT18.</title>
        <authorList>
            <person name="Parkhill J."/>
            <person name="Dougan G."/>
            <person name="James K.D."/>
            <person name="Thomson N.R."/>
            <person name="Pickard D."/>
            <person name="Wain J."/>
            <person name="Churcher C.M."/>
            <person name="Mungall K.L."/>
            <person name="Bentley S.D."/>
            <person name="Holden M.T.G."/>
            <person name="Sebaihia M."/>
            <person name="Baker S."/>
            <person name="Basham D."/>
            <person name="Brooks K."/>
            <person name="Chillingworth T."/>
            <person name="Connerton P."/>
            <person name="Cronin A."/>
            <person name="Davis P."/>
            <person name="Davies R.M."/>
            <person name="Dowd L."/>
            <person name="White N."/>
            <person name="Farrar J."/>
            <person name="Feltwell T."/>
            <person name="Hamlin N."/>
            <person name="Haque A."/>
            <person name="Hien T.T."/>
            <person name="Holroyd S."/>
            <person name="Jagels K."/>
            <person name="Krogh A."/>
            <person name="Larsen T.S."/>
            <person name="Leather S."/>
            <person name="Moule S."/>
            <person name="O'Gaora P."/>
            <person name="Parry C."/>
            <person name="Quail M.A."/>
            <person name="Rutherford K.M."/>
            <person name="Simmonds M."/>
            <person name="Skelton J."/>
            <person name="Stevens K."/>
            <person name="Whitehead S."/>
            <person name="Barrell B.G."/>
        </authorList>
    </citation>
    <scope>NUCLEOTIDE SEQUENCE [LARGE SCALE GENOMIC DNA]</scope>
    <source>
        <strain>CT18</strain>
    </source>
</reference>
<reference key="2">
    <citation type="journal article" date="2003" name="J. Bacteriol.">
        <title>Comparative genomics of Salmonella enterica serovar Typhi strains Ty2 and CT18.</title>
        <authorList>
            <person name="Deng W."/>
            <person name="Liou S.-R."/>
            <person name="Plunkett G. III"/>
            <person name="Mayhew G.F."/>
            <person name="Rose D.J."/>
            <person name="Burland V."/>
            <person name="Kodoyianni V."/>
            <person name="Schwartz D.C."/>
            <person name="Blattner F.R."/>
        </authorList>
    </citation>
    <scope>NUCLEOTIDE SEQUENCE [LARGE SCALE GENOMIC DNA]</scope>
    <source>
        <strain>ATCC 700931 / Ty2</strain>
    </source>
</reference>
<reference key="3">
    <citation type="submission" date="1996-06" db="EMBL/GenBank/DDBJ databases">
        <authorList>
            <person name="Fernandez-Mora M."/>
            <person name="Calva E."/>
        </authorList>
    </citation>
    <scope>NUCLEOTIDE SEQUENCE [GENOMIC DNA] OF 1-74</scope>
    <source>
        <strain>IMSS-1</strain>
    </source>
</reference>
<name>AAT_SALTI</name>
<feature type="chain" id="PRO_0000123839" description="Aspartate aminotransferase">
    <location>
        <begin position="1"/>
        <end position="396"/>
    </location>
</feature>
<feature type="binding site" evidence="1">
    <location>
        <position position="34"/>
    </location>
    <ligand>
        <name>L-aspartate</name>
        <dbReference type="ChEBI" id="CHEBI:29991"/>
    </ligand>
</feature>
<feature type="binding site" evidence="1">
    <location>
        <position position="130"/>
    </location>
    <ligand>
        <name>L-aspartate</name>
        <dbReference type="ChEBI" id="CHEBI:29991"/>
    </ligand>
</feature>
<feature type="binding site" evidence="1">
    <location>
        <position position="183"/>
    </location>
    <ligand>
        <name>L-aspartate</name>
        <dbReference type="ChEBI" id="CHEBI:29991"/>
    </ligand>
</feature>
<feature type="binding site" evidence="1">
    <location>
        <position position="374"/>
    </location>
    <ligand>
        <name>L-aspartate</name>
        <dbReference type="ChEBI" id="CHEBI:29991"/>
    </ligand>
</feature>
<feature type="modified residue" description="N6-(pyridoxal phosphate)lysine" evidence="1">
    <location>
        <position position="246"/>
    </location>
</feature>
<gene>
    <name type="primary">aspC</name>
    <name type="ordered locus">STY1000</name>
    <name type="ordered locus">t1936</name>
</gene>
<sequence>MFENITAAPADPILGLADLFRADDRPGKINLGIGVYKDETGKTPVLTSVKKAEQYLLENETTKNYLGIDGIPEFARCTQELLFGKGSALINDKRARTAQTPGGTGALRIAADFLAKNTPVKRVWVSNPSWPNHKSVFNAAGLEVREYAYYDAENHSLDFEALQASLSEAQAGDVVLFHGCCHNPTGIDPTLEQWQVLAELSVEKGWLPLFDFAYQGFARGLEEDAEGLRAFAALHKELIVASSYSKNFGLYNERVGACTLVAADAETVDRAFSQMKSAIRANYSNPPAHGASIVATILSNDALRAIWEQELTDMRQRIQRMRQLFVNTLQEKGANRDFSFIIKQNGMFSFSGLTKDQVLRLREEFGVYAVASGRVNVAGMTPDNMAPLCEAIVAVL</sequence>
<accession>Q56114</accession>
<proteinExistence type="inferred from homology"/>
<protein>
    <recommendedName>
        <fullName>Aspartate aminotransferase</fullName>
        <shortName>AspAT</shortName>
        <ecNumber>2.6.1.1</ecNumber>
    </recommendedName>
    <alternativeName>
        <fullName>Transaminase A</fullName>
    </alternativeName>
</protein>
<organism>
    <name type="scientific">Salmonella typhi</name>
    <dbReference type="NCBI Taxonomy" id="90370"/>
    <lineage>
        <taxon>Bacteria</taxon>
        <taxon>Pseudomonadati</taxon>
        <taxon>Pseudomonadota</taxon>
        <taxon>Gammaproteobacteria</taxon>
        <taxon>Enterobacterales</taxon>
        <taxon>Enterobacteriaceae</taxon>
        <taxon>Salmonella</taxon>
    </lineage>
</organism>
<comment type="catalytic activity">
    <reaction>
        <text>L-aspartate + 2-oxoglutarate = oxaloacetate + L-glutamate</text>
        <dbReference type="Rhea" id="RHEA:21824"/>
        <dbReference type="ChEBI" id="CHEBI:16452"/>
        <dbReference type="ChEBI" id="CHEBI:16810"/>
        <dbReference type="ChEBI" id="CHEBI:29985"/>
        <dbReference type="ChEBI" id="CHEBI:29991"/>
        <dbReference type="EC" id="2.6.1.1"/>
    </reaction>
</comment>
<comment type="cofactor">
    <cofactor evidence="1">
        <name>pyridoxal 5'-phosphate</name>
        <dbReference type="ChEBI" id="CHEBI:597326"/>
    </cofactor>
</comment>
<comment type="subunit">
    <text evidence="1">Homodimer.</text>
</comment>
<comment type="subcellular location">
    <subcellularLocation>
        <location>Cytoplasm</location>
    </subcellularLocation>
</comment>
<comment type="similarity">
    <text evidence="2">Belongs to the class-I pyridoxal-phosphate-dependent aminotransferase family.</text>
</comment>